<dbReference type="EMBL" id="CP000413">
    <property type="protein sequence ID" value="ABJ59711.1"/>
    <property type="molecule type" value="Genomic_DNA"/>
</dbReference>
<dbReference type="RefSeq" id="WP_003647822.1">
    <property type="nucleotide sequence ID" value="NZ_WBMG01000001.1"/>
</dbReference>
<dbReference type="SMR" id="Q046B1"/>
<dbReference type="GeneID" id="29639855"/>
<dbReference type="KEGG" id="lga:LGAS_0305"/>
<dbReference type="HOGENOM" id="CLU_065464_1_2_9"/>
<dbReference type="BioCyc" id="LGAS324831:G1G6Y-304-MONOMER"/>
<dbReference type="Proteomes" id="UP000000664">
    <property type="component" value="Chromosome"/>
</dbReference>
<dbReference type="GO" id="GO:0022625">
    <property type="term" value="C:cytosolic large ribosomal subunit"/>
    <property type="evidence" value="ECO:0007669"/>
    <property type="project" value="TreeGrafter"/>
</dbReference>
<dbReference type="GO" id="GO:0019843">
    <property type="term" value="F:rRNA binding"/>
    <property type="evidence" value="ECO:0007669"/>
    <property type="project" value="UniProtKB-UniRule"/>
</dbReference>
<dbReference type="GO" id="GO:0003735">
    <property type="term" value="F:structural constituent of ribosome"/>
    <property type="evidence" value="ECO:0007669"/>
    <property type="project" value="InterPro"/>
</dbReference>
<dbReference type="GO" id="GO:0002181">
    <property type="term" value="P:cytoplasmic translation"/>
    <property type="evidence" value="ECO:0007669"/>
    <property type="project" value="TreeGrafter"/>
</dbReference>
<dbReference type="FunFam" id="3.90.930.12:FF:000001">
    <property type="entry name" value="50S ribosomal protein L6"/>
    <property type="match status" value="1"/>
</dbReference>
<dbReference type="Gene3D" id="3.90.930.12">
    <property type="entry name" value="Ribosomal protein L6, alpha-beta domain"/>
    <property type="match status" value="2"/>
</dbReference>
<dbReference type="HAMAP" id="MF_01365_B">
    <property type="entry name" value="Ribosomal_uL6_B"/>
    <property type="match status" value="1"/>
</dbReference>
<dbReference type="InterPro" id="IPR000702">
    <property type="entry name" value="Ribosomal_uL6-like"/>
</dbReference>
<dbReference type="InterPro" id="IPR036789">
    <property type="entry name" value="Ribosomal_uL6-like_a/b-dom_sf"/>
</dbReference>
<dbReference type="InterPro" id="IPR020040">
    <property type="entry name" value="Ribosomal_uL6_a/b-dom"/>
</dbReference>
<dbReference type="InterPro" id="IPR019906">
    <property type="entry name" value="Ribosomal_uL6_bac-type"/>
</dbReference>
<dbReference type="InterPro" id="IPR002358">
    <property type="entry name" value="Ribosomal_uL6_CS"/>
</dbReference>
<dbReference type="NCBIfam" id="TIGR03654">
    <property type="entry name" value="L6_bact"/>
    <property type="match status" value="1"/>
</dbReference>
<dbReference type="PANTHER" id="PTHR11655">
    <property type="entry name" value="60S/50S RIBOSOMAL PROTEIN L6/L9"/>
    <property type="match status" value="1"/>
</dbReference>
<dbReference type="PANTHER" id="PTHR11655:SF14">
    <property type="entry name" value="LARGE RIBOSOMAL SUBUNIT PROTEIN UL6M"/>
    <property type="match status" value="1"/>
</dbReference>
<dbReference type="Pfam" id="PF00347">
    <property type="entry name" value="Ribosomal_L6"/>
    <property type="match status" value="2"/>
</dbReference>
<dbReference type="PIRSF" id="PIRSF002162">
    <property type="entry name" value="Ribosomal_L6"/>
    <property type="match status" value="1"/>
</dbReference>
<dbReference type="PRINTS" id="PR00059">
    <property type="entry name" value="RIBOSOMALL6"/>
</dbReference>
<dbReference type="SUPFAM" id="SSF56053">
    <property type="entry name" value="Ribosomal protein L6"/>
    <property type="match status" value="2"/>
</dbReference>
<dbReference type="PROSITE" id="PS00525">
    <property type="entry name" value="RIBOSOMAL_L6_1"/>
    <property type="match status" value="1"/>
</dbReference>
<organism>
    <name type="scientific">Lactobacillus gasseri (strain ATCC 33323 / DSM 20243 / BCRC 14619 / CIP 102991 / JCM 1131 / KCTC 3163 / NCIMB 11718 / NCTC 13722 / AM63)</name>
    <dbReference type="NCBI Taxonomy" id="324831"/>
    <lineage>
        <taxon>Bacteria</taxon>
        <taxon>Bacillati</taxon>
        <taxon>Bacillota</taxon>
        <taxon>Bacilli</taxon>
        <taxon>Lactobacillales</taxon>
        <taxon>Lactobacillaceae</taxon>
        <taxon>Lactobacillus</taxon>
    </lineage>
</organism>
<reference key="1">
    <citation type="journal article" date="2006" name="Proc. Natl. Acad. Sci. U.S.A.">
        <title>Comparative genomics of the lactic acid bacteria.</title>
        <authorList>
            <person name="Makarova K.S."/>
            <person name="Slesarev A."/>
            <person name="Wolf Y.I."/>
            <person name="Sorokin A."/>
            <person name="Mirkin B."/>
            <person name="Koonin E.V."/>
            <person name="Pavlov A."/>
            <person name="Pavlova N."/>
            <person name="Karamychev V."/>
            <person name="Polouchine N."/>
            <person name="Shakhova V."/>
            <person name="Grigoriev I."/>
            <person name="Lou Y."/>
            <person name="Rohksar D."/>
            <person name="Lucas S."/>
            <person name="Huang K."/>
            <person name="Goodstein D.M."/>
            <person name="Hawkins T."/>
            <person name="Plengvidhya V."/>
            <person name="Welker D."/>
            <person name="Hughes J."/>
            <person name="Goh Y."/>
            <person name="Benson A."/>
            <person name="Baldwin K."/>
            <person name="Lee J.-H."/>
            <person name="Diaz-Muniz I."/>
            <person name="Dosti B."/>
            <person name="Smeianov V."/>
            <person name="Wechter W."/>
            <person name="Barabote R."/>
            <person name="Lorca G."/>
            <person name="Altermann E."/>
            <person name="Barrangou R."/>
            <person name="Ganesan B."/>
            <person name="Xie Y."/>
            <person name="Rawsthorne H."/>
            <person name="Tamir D."/>
            <person name="Parker C."/>
            <person name="Breidt F."/>
            <person name="Broadbent J.R."/>
            <person name="Hutkins R."/>
            <person name="O'Sullivan D."/>
            <person name="Steele J."/>
            <person name="Unlu G."/>
            <person name="Saier M.H. Jr."/>
            <person name="Klaenhammer T."/>
            <person name="Richardson P."/>
            <person name="Kozyavkin S."/>
            <person name="Weimer B.C."/>
            <person name="Mills D.A."/>
        </authorList>
    </citation>
    <scope>NUCLEOTIDE SEQUENCE [LARGE SCALE GENOMIC DNA]</scope>
    <source>
        <strain>ATCC 33323 / DSM 20243 / BCRC 14619 / CIP 102991 / JCM 1131 / KCTC 3163 / NCIMB 11718 / NCTC 13722 / AM63</strain>
    </source>
</reference>
<evidence type="ECO:0000255" key="1">
    <source>
        <dbReference type="HAMAP-Rule" id="MF_01365"/>
    </source>
</evidence>
<evidence type="ECO:0000305" key="2"/>
<keyword id="KW-0687">Ribonucleoprotein</keyword>
<keyword id="KW-0689">Ribosomal protein</keyword>
<keyword id="KW-0694">RNA-binding</keyword>
<keyword id="KW-0699">rRNA-binding</keyword>
<accession>Q046B1</accession>
<comment type="function">
    <text evidence="1">This protein binds to the 23S rRNA, and is important in its secondary structure. It is located near the subunit interface in the base of the L7/L12 stalk, and near the tRNA binding site of the peptidyltransferase center.</text>
</comment>
<comment type="subunit">
    <text evidence="1">Part of the 50S ribosomal subunit.</text>
</comment>
<comment type="similarity">
    <text evidence="1">Belongs to the universal ribosomal protein uL6 family.</text>
</comment>
<name>RL6_LACGA</name>
<feature type="chain" id="PRO_1000055248" description="Large ribosomal subunit protein uL6">
    <location>
        <begin position="1"/>
        <end position="176"/>
    </location>
</feature>
<protein>
    <recommendedName>
        <fullName evidence="1">Large ribosomal subunit protein uL6</fullName>
    </recommendedName>
    <alternativeName>
        <fullName evidence="2">50S ribosomal protein L6</fullName>
    </alternativeName>
</protein>
<proteinExistence type="inferred from homology"/>
<gene>
    <name evidence="1" type="primary">rplF</name>
    <name type="ordered locus">LGAS_0305</name>
</gene>
<sequence>MSRIGLKVIEVPEKVTVTKNGDDITVKGPKGELTRYFDPRITFEQKDGEIHFSRSSEADKALHGTERANLASMIEGVTDGYVKKLTLVGVGYRAVAQGKKLTLNVGYSHPVVFEAPEGVTVKTPSATSIEIEGISKQVVGQFAAEIRDVRPPEPYKGKGIRYEDEYVRRKEGKTGK</sequence>